<dbReference type="GO" id="GO:0030089">
    <property type="term" value="C:phycobilisome"/>
    <property type="evidence" value="ECO:0007669"/>
    <property type="project" value="UniProtKB-KW"/>
</dbReference>
<dbReference type="GO" id="GO:0031676">
    <property type="term" value="C:plasma membrane-derived thylakoid membrane"/>
    <property type="evidence" value="ECO:0007669"/>
    <property type="project" value="UniProtKB-SubCell"/>
</dbReference>
<dbReference type="GO" id="GO:0015979">
    <property type="term" value="P:photosynthesis"/>
    <property type="evidence" value="ECO:0007669"/>
    <property type="project" value="UniProtKB-KW"/>
</dbReference>
<comment type="function">
    <text evidence="4">Rod-core linker protein required for attachment of phycocyanin to allophycocyanin in cores of phycobilisomes.</text>
</comment>
<comment type="function">
    <text evidence="4">Linker polypeptides determine the state of aggregation and the location of the disk-shaped phycobiliprotein units within the phycobilisome and modulate their spectroscopic properties in order to mediate a directed and optimal energy transfer.</text>
</comment>
<comment type="subunit">
    <text evidence="1">The phycobilisome is a hemidiscoidal structure that is composed of two distinct substructures: a core complex and a number of rods radiating from the core.</text>
</comment>
<comment type="subcellular location">
    <subcellularLocation>
        <location evidence="1">Cellular thylakoid membrane</location>
        <topology evidence="1">Peripheral membrane protein</topology>
        <orientation evidence="1">Cytoplasmic side</orientation>
    </subcellularLocation>
</comment>
<comment type="similarity">
    <text evidence="2">Belongs to the phycobilisome linker protein family.</text>
</comment>
<keyword id="KW-0042">Antenna complex</keyword>
<keyword id="KW-0903">Direct protein sequencing</keyword>
<keyword id="KW-0472">Membrane</keyword>
<keyword id="KW-0602">Photosynthesis</keyword>
<keyword id="KW-0605">Phycobilisome</keyword>
<keyword id="KW-0793">Thylakoid</keyword>
<reference evidence="4" key="1">
    <citation type="submission" date="2001-10" db="UniProtKB">
        <authorList>
            <person name="Apte S.K."/>
            <person name="Uhlemann E."/>
            <person name="Schmid R."/>
            <person name="Altendorf K."/>
        </authorList>
    </citation>
    <scope>PROTEIN SEQUENCE OF 2-11</scope>
</reference>
<name>PYG3_ANASL</name>
<gene>
    <name evidence="1" type="primary">cpcG3</name>
</gene>
<evidence type="ECO:0000250" key="1">
    <source>
        <dbReference type="UniProtKB" id="P29988"/>
    </source>
</evidence>
<evidence type="ECO:0000255" key="2"/>
<evidence type="ECO:0000269" key="3">
    <source ref="1"/>
</evidence>
<evidence type="ECO:0000305" key="4"/>
<protein>
    <recommendedName>
        <fullName>Phycobilisome rod-core linker polypeptide CpcG3</fullName>
    </recommendedName>
</protein>
<organism>
    <name type="scientific">Anabaena sp. (strain L31)</name>
    <dbReference type="NCBI Taxonomy" id="29412"/>
    <lineage>
        <taxon>Bacteria</taxon>
        <taxon>Bacillati</taxon>
        <taxon>Cyanobacteriota</taxon>
        <taxon>Cyanophyceae</taxon>
        <taxon>Nostocales</taxon>
        <taxon>Nostocaceae</taxon>
        <taxon>Anabaena</taxon>
    </lineage>
</organism>
<sequence length="11" mass="1276">MALPLLEYKPT</sequence>
<accession>P83154</accession>
<proteinExistence type="evidence at protein level"/>
<feature type="initiator methionine" description="Removed" evidence="3">
    <location>
        <position position="1"/>
    </location>
</feature>
<feature type="chain" id="PRO_0000262935" description="Phycobilisome rod-core linker polypeptide CpcG3">
    <location>
        <begin position="2"/>
        <end position="11" status="greater than"/>
    </location>
</feature>
<feature type="non-terminal residue">
    <location>
        <position position="11"/>
    </location>
</feature>